<feature type="chain" id="PRO_1000013671" description="S-adenosylmethionine decarboxylase beta chain" evidence="1">
    <location>
        <begin position="1"/>
        <end position="62"/>
    </location>
</feature>
<feature type="chain" id="PRO_0000315024" description="S-adenosylmethionine decarboxylase alpha chain" evidence="1">
    <location>
        <begin position="63"/>
        <end position="127"/>
    </location>
</feature>
<feature type="active site" description="Schiff-base intermediate with substrate; via pyruvic acid" evidence="1">
    <location>
        <position position="63"/>
    </location>
</feature>
<feature type="active site" description="Proton acceptor; for processing activity" evidence="1">
    <location>
        <position position="68"/>
    </location>
</feature>
<feature type="active site" description="Proton donor; for catalytic activity" evidence="1">
    <location>
        <position position="83"/>
    </location>
</feature>
<feature type="site" description="Cleavage (non-hydrolytic); by autolysis" evidence="1">
    <location>
        <begin position="62"/>
        <end position="63"/>
    </location>
</feature>
<feature type="modified residue" description="Pyruvic acid (Ser); by autocatalysis" evidence="1">
    <location>
        <position position="63"/>
    </location>
</feature>
<sequence length="127" mass="13952">MNALGRHVIAELYGCGFDVLNDVKRVEEIMVRSALEAGAEIREVAFHKFSPQGVSGVVVISESHLAIHTWPELGYAAVDVFTCGDTVDPWDATNYLAKEFGAKYMTAKETKRGVMVEEFAESQAVNL</sequence>
<dbReference type="EC" id="4.1.1.50" evidence="1"/>
<dbReference type="EMBL" id="CP000141">
    <property type="protein sequence ID" value="ABB14975.1"/>
    <property type="molecule type" value="Genomic_DNA"/>
</dbReference>
<dbReference type="SMR" id="Q3AB53"/>
<dbReference type="FunCoup" id="Q3AB53">
    <property type="interactions" value="35"/>
</dbReference>
<dbReference type="STRING" id="246194.CHY_1811"/>
<dbReference type="KEGG" id="chy:CHY_1811"/>
<dbReference type="eggNOG" id="COG1586">
    <property type="taxonomic scope" value="Bacteria"/>
</dbReference>
<dbReference type="HOGENOM" id="CLU_125470_2_3_9"/>
<dbReference type="InParanoid" id="Q3AB53"/>
<dbReference type="OrthoDB" id="9793120at2"/>
<dbReference type="UniPathway" id="UPA00331">
    <property type="reaction ID" value="UER00451"/>
</dbReference>
<dbReference type="Proteomes" id="UP000002706">
    <property type="component" value="Chromosome"/>
</dbReference>
<dbReference type="GO" id="GO:0005829">
    <property type="term" value="C:cytosol"/>
    <property type="evidence" value="ECO:0007669"/>
    <property type="project" value="TreeGrafter"/>
</dbReference>
<dbReference type="GO" id="GO:0004014">
    <property type="term" value="F:adenosylmethionine decarboxylase activity"/>
    <property type="evidence" value="ECO:0007669"/>
    <property type="project" value="UniProtKB-UniRule"/>
</dbReference>
<dbReference type="GO" id="GO:0008295">
    <property type="term" value="P:spermidine biosynthetic process"/>
    <property type="evidence" value="ECO:0007669"/>
    <property type="project" value="UniProtKB-UniRule"/>
</dbReference>
<dbReference type="FunFam" id="3.30.360.110:FF:000001">
    <property type="entry name" value="S-adenosylmethionine decarboxylase proenzyme"/>
    <property type="match status" value="1"/>
</dbReference>
<dbReference type="Gene3D" id="3.30.160.750">
    <property type="match status" value="1"/>
</dbReference>
<dbReference type="Gene3D" id="3.30.360.110">
    <property type="entry name" value="S-adenosylmethionine decarboxylase domain"/>
    <property type="match status" value="1"/>
</dbReference>
<dbReference type="HAMAP" id="MF_00464">
    <property type="entry name" value="AdoMetDC_1"/>
    <property type="match status" value="1"/>
</dbReference>
<dbReference type="InterPro" id="IPR042286">
    <property type="entry name" value="AdoMetDC_C"/>
</dbReference>
<dbReference type="InterPro" id="IPR003826">
    <property type="entry name" value="AdoMetDC_fam_prok"/>
</dbReference>
<dbReference type="InterPro" id="IPR042284">
    <property type="entry name" value="AdoMetDC_N"/>
</dbReference>
<dbReference type="InterPro" id="IPR016067">
    <property type="entry name" value="S-AdoMet_deCO2ase_core"/>
</dbReference>
<dbReference type="InterPro" id="IPR017716">
    <property type="entry name" value="S-AdoMet_deCOase_pro-enz"/>
</dbReference>
<dbReference type="NCBIfam" id="TIGR03330">
    <property type="entry name" value="SAM_DCase_Bsu"/>
    <property type="match status" value="1"/>
</dbReference>
<dbReference type="PANTHER" id="PTHR33866">
    <property type="entry name" value="S-ADENOSYLMETHIONINE DECARBOXYLASE PROENZYME"/>
    <property type="match status" value="1"/>
</dbReference>
<dbReference type="PANTHER" id="PTHR33866:SF2">
    <property type="entry name" value="S-ADENOSYLMETHIONINE DECARBOXYLASE PROENZYME"/>
    <property type="match status" value="1"/>
</dbReference>
<dbReference type="Pfam" id="PF02675">
    <property type="entry name" value="AdoMet_dc"/>
    <property type="match status" value="1"/>
</dbReference>
<dbReference type="SUPFAM" id="SSF56276">
    <property type="entry name" value="S-adenosylmethionine decarboxylase"/>
    <property type="match status" value="1"/>
</dbReference>
<name>SPEH_CARHZ</name>
<accession>Q3AB53</accession>
<proteinExistence type="inferred from homology"/>
<gene>
    <name evidence="1" type="primary">speH</name>
    <name type="ordered locus">CHY_1811</name>
</gene>
<protein>
    <recommendedName>
        <fullName evidence="1">S-adenosylmethionine decarboxylase proenzyme</fullName>
        <shortName evidence="1">AdoMetDC</shortName>
        <shortName evidence="1">SAMDC</shortName>
        <ecNumber evidence="1">4.1.1.50</ecNumber>
    </recommendedName>
    <component>
        <recommendedName>
            <fullName evidence="1">S-adenosylmethionine decarboxylase beta chain</fullName>
        </recommendedName>
    </component>
    <component>
        <recommendedName>
            <fullName evidence="1">S-adenosylmethionine decarboxylase alpha chain</fullName>
        </recommendedName>
    </component>
</protein>
<reference key="1">
    <citation type="journal article" date="2005" name="PLoS Genet.">
        <title>Life in hot carbon monoxide: the complete genome sequence of Carboxydothermus hydrogenoformans Z-2901.</title>
        <authorList>
            <person name="Wu M."/>
            <person name="Ren Q."/>
            <person name="Durkin A.S."/>
            <person name="Daugherty S.C."/>
            <person name="Brinkac L.M."/>
            <person name="Dodson R.J."/>
            <person name="Madupu R."/>
            <person name="Sullivan S.A."/>
            <person name="Kolonay J.F."/>
            <person name="Nelson W.C."/>
            <person name="Tallon L.J."/>
            <person name="Jones K.M."/>
            <person name="Ulrich L.E."/>
            <person name="Gonzalez J.M."/>
            <person name="Zhulin I.B."/>
            <person name="Robb F.T."/>
            <person name="Eisen J.A."/>
        </authorList>
    </citation>
    <scope>NUCLEOTIDE SEQUENCE [LARGE SCALE GENOMIC DNA]</scope>
    <source>
        <strain>ATCC BAA-161 / DSM 6008 / Z-2901</strain>
    </source>
</reference>
<evidence type="ECO:0000255" key="1">
    <source>
        <dbReference type="HAMAP-Rule" id="MF_00464"/>
    </source>
</evidence>
<organism>
    <name type="scientific">Carboxydothermus hydrogenoformans (strain ATCC BAA-161 / DSM 6008 / Z-2901)</name>
    <dbReference type="NCBI Taxonomy" id="246194"/>
    <lineage>
        <taxon>Bacteria</taxon>
        <taxon>Bacillati</taxon>
        <taxon>Bacillota</taxon>
        <taxon>Clostridia</taxon>
        <taxon>Thermoanaerobacterales</taxon>
        <taxon>Thermoanaerobacteraceae</taxon>
        <taxon>Carboxydothermus</taxon>
    </lineage>
</organism>
<keyword id="KW-0068">Autocatalytic cleavage</keyword>
<keyword id="KW-0210">Decarboxylase</keyword>
<keyword id="KW-0456">Lyase</keyword>
<keyword id="KW-0620">Polyamine biosynthesis</keyword>
<keyword id="KW-0670">Pyruvate</keyword>
<keyword id="KW-1185">Reference proteome</keyword>
<keyword id="KW-0949">S-adenosyl-L-methionine</keyword>
<keyword id="KW-0704">Schiff base</keyword>
<keyword id="KW-0745">Spermidine biosynthesis</keyword>
<keyword id="KW-0865">Zymogen</keyword>
<comment type="function">
    <text evidence="1">Catalyzes the decarboxylation of S-adenosylmethionine to S-adenosylmethioninamine (dcAdoMet), the propylamine donor required for the synthesis of the polyamines spermine and spermidine from the diamine putrescine.</text>
</comment>
<comment type="catalytic activity">
    <reaction evidence="1">
        <text>S-adenosyl-L-methionine + H(+) = S-adenosyl 3-(methylsulfanyl)propylamine + CO2</text>
        <dbReference type="Rhea" id="RHEA:15981"/>
        <dbReference type="ChEBI" id="CHEBI:15378"/>
        <dbReference type="ChEBI" id="CHEBI:16526"/>
        <dbReference type="ChEBI" id="CHEBI:57443"/>
        <dbReference type="ChEBI" id="CHEBI:59789"/>
        <dbReference type="EC" id="4.1.1.50"/>
    </reaction>
</comment>
<comment type="cofactor">
    <cofactor evidence="1">
        <name>pyruvate</name>
        <dbReference type="ChEBI" id="CHEBI:15361"/>
    </cofactor>
    <text evidence="1">Binds 1 pyruvoyl group covalently per subunit.</text>
</comment>
<comment type="pathway">
    <text evidence="1">Amine and polyamine biosynthesis; S-adenosylmethioninamine biosynthesis; S-adenosylmethioninamine from S-adenosyl-L-methionine: step 1/1.</text>
</comment>
<comment type="subunit">
    <text evidence="1">Heterotetramer of two alpha and two beta chains arranged as a dimer of alpha/beta heterodimers.</text>
</comment>
<comment type="PTM">
    <text evidence="1">Is synthesized initially as an inactive proenzyme. Formation of the active enzyme involves a self-maturation process in which the active site pyruvoyl group is generated from an internal serine residue via an autocatalytic post-translational modification. Two non-identical subunits are generated from the proenzyme in this reaction, and the pyruvate is formed at the N-terminus of the alpha chain, which is derived from the carboxyl end of the proenzyme. The post-translation cleavage follows an unusual pathway, termed non-hydrolytic serinolysis, in which the side chain hydroxyl group of the serine supplies its oxygen atom to form the C-terminus of the beta chain, while the remainder of the serine residue undergoes an oxidative deamination to produce ammonia and the pyruvoyl group blocking the N-terminus of the alpha chain.</text>
</comment>
<comment type="similarity">
    <text evidence="1">Belongs to the prokaryotic AdoMetDC family. Type 1 subfamily.</text>
</comment>